<reference key="1">
    <citation type="journal article" date="2005" name="Proc. Natl. Acad. Sci. U.S.A.">
        <title>Genome analysis of multiple pathogenic isolates of Streptococcus agalactiae: implications for the microbial 'pan-genome'.</title>
        <authorList>
            <person name="Tettelin H."/>
            <person name="Masignani V."/>
            <person name="Cieslewicz M.J."/>
            <person name="Donati C."/>
            <person name="Medini D."/>
            <person name="Ward N.L."/>
            <person name="Angiuoli S.V."/>
            <person name="Crabtree J."/>
            <person name="Jones A.L."/>
            <person name="Durkin A.S."/>
            <person name="DeBoy R.T."/>
            <person name="Davidsen T.M."/>
            <person name="Mora M."/>
            <person name="Scarselli M."/>
            <person name="Margarit y Ros I."/>
            <person name="Peterson J.D."/>
            <person name="Hauser C.R."/>
            <person name="Sundaram J.P."/>
            <person name="Nelson W.C."/>
            <person name="Madupu R."/>
            <person name="Brinkac L.M."/>
            <person name="Dodson R.J."/>
            <person name="Rosovitz M.J."/>
            <person name="Sullivan S.A."/>
            <person name="Daugherty S.C."/>
            <person name="Haft D.H."/>
            <person name="Selengut J."/>
            <person name="Gwinn M.L."/>
            <person name="Zhou L."/>
            <person name="Zafar N."/>
            <person name="Khouri H."/>
            <person name="Radune D."/>
            <person name="Dimitrov G."/>
            <person name="Watkins K."/>
            <person name="O'Connor K.J."/>
            <person name="Smith S."/>
            <person name="Utterback T.R."/>
            <person name="White O."/>
            <person name="Rubens C.E."/>
            <person name="Grandi G."/>
            <person name="Madoff L.C."/>
            <person name="Kasper D.L."/>
            <person name="Telford J.L."/>
            <person name="Wessels M.R."/>
            <person name="Rappuoli R."/>
            <person name="Fraser C.M."/>
        </authorList>
    </citation>
    <scope>NUCLEOTIDE SEQUENCE [LARGE SCALE GENOMIC DNA]</scope>
    <source>
        <strain>ATCC 27591 / A909 / CDC SS700</strain>
    </source>
</reference>
<sequence length="436" mass="48981">MVLPTVAIVGRPNVGKSTLFNRIAGERISIVEDVEGVTRDRIYTTGEWLNRKFSLIDTGGIDDVDAPFMEQIKHQADIAMTEADVIVFVVSGKEGVTDADEYVSRILYKTNKPVILAVNKVDNPEMRNDIYDFYSLGLGDPYPLSSVHGIGTGDILDAIVENLPVEEENENPDIIRFSLIGRPNVGKSSLINAILGEDRVIASPVAGTTRDAIDTNFVDSQGQEYTMIDTAGMRKSGKVYENTEKYSVMRSMRAIDRSDVVLMVINAEEGIREYDKRIAGFAHETGKGIIIVVNKWDTIEKDNHTVSQWEADIRDNFQFLSYAPIIFVSAETKQRLHKLPDMIKRISESQNKRIPSAVLNDVIMDAIAINPTPTDKGKRLKIFYATQVAVKPPTFVVFVNEEELMHFSYLRFLENQIREAFVFEGTPINLIARKRK</sequence>
<keyword id="KW-0342">GTP-binding</keyword>
<keyword id="KW-0547">Nucleotide-binding</keyword>
<keyword id="KW-0677">Repeat</keyword>
<keyword id="KW-0690">Ribosome biogenesis</keyword>
<gene>
    <name evidence="1" type="primary">der</name>
    <name type="synonym">engA</name>
    <name type="ordered locus">SAK_1634</name>
</gene>
<evidence type="ECO:0000255" key="1">
    <source>
        <dbReference type="HAMAP-Rule" id="MF_00195"/>
    </source>
</evidence>
<comment type="function">
    <text evidence="1">GTPase that plays an essential role in the late steps of ribosome biogenesis.</text>
</comment>
<comment type="subunit">
    <text evidence="1">Associates with the 50S ribosomal subunit.</text>
</comment>
<comment type="similarity">
    <text evidence="1">Belongs to the TRAFAC class TrmE-Era-EngA-EngB-Septin-like GTPase superfamily. EngA (Der) GTPase family.</text>
</comment>
<protein>
    <recommendedName>
        <fullName evidence="1">GTPase Der</fullName>
    </recommendedName>
    <alternativeName>
        <fullName evidence="1">GTP-binding protein EngA</fullName>
    </alternativeName>
</protein>
<name>DER_STRA1</name>
<dbReference type="EMBL" id="CP000114">
    <property type="protein sequence ID" value="ABA46288.1"/>
    <property type="molecule type" value="Genomic_DNA"/>
</dbReference>
<dbReference type="RefSeq" id="WP_000244022.1">
    <property type="nucleotide sequence ID" value="NC_007432.1"/>
</dbReference>
<dbReference type="SMR" id="Q3JZR6"/>
<dbReference type="GeneID" id="66886464"/>
<dbReference type="KEGG" id="sak:SAK_1634"/>
<dbReference type="HOGENOM" id="CLU_016077_6_2_9"/>
<dbReference type="GO" id="GO:0005525">
    <property type="term" value="F:GTP binding"/>
    <property type="evidence" value="ECO:0007669"/>
    <property type="project" value="UniProtKB-UniRule"/>
</dbReference>
<dbReference type="GO" id="GO:0043022">
    <property type="term" value="F:ribosome binding"/>
    <property type="evidence" value="ECO:0007669"/>
    <property type="project" value="TreeGrafter"/>
</dbReference>
<dbReference type="GO" id="GO:0042254">
    <property type="term" value="P:ribosome biogenesis"/>
    <property type="evidence" value="ECO:0007669"/>
    <property type="project" value="UniProtKB-KW"/>
</dbReference>
<dbReference type="CDD" id="cd01894">
    <property type="entry name" value="EngA1"/>
    <property type="match status" value="1"/>
</dbReference>
<dbReference type="CDD" id="cd01895">
    <property type="entry name" value="EngA2"/>
    <property type="match status" value="1"/>
</dbReference>
<dbReference type="FunFam" id="3.30.300.20:FF:000004">
    <property type="entry name" value="GTPase Der"/>
    <property type="match status" value="1"/>
</dbReference>
<dbReference type="FunFam" id="3.40.50.300:FF:000040">
    <property type="entry name" value="GTPase Der"/>
    <property type="match status" value="1"/>
</dbReference>
<dbReference type="FunFam" id="3.40.50.300:FF:000057">
    <property type="entry name" value="GTPase Der"/>
    <property type="match status" value="1"/>
</dbReference>
<dbReference type="Gene3D" id="3.30.300.20">
    <property type="match status" value="1"/>
</dbReference>
<dbReference type="Gene3D" id="3.40.50.300">
    <property type="entry name" value="P-loop containing nucleotide triphosphate hydrolases"/>
    <property type="match status" value="2"/>
</dbReference>
<dbReference type="HAMAP" id="MF_00195">
    <property type="entry name" value="GTPase_Der"/>
    <property type="match status" value="1"/>
</dbReference>
<dbReference type="InterPro" id="IPR031166">
    <property type="entry name" value="G_ENGA"/>
</dbReference>
<dbReference type="InterPro" id="IPR006073">
    <property type="entry name" value="GTP-bd"/>
</dbReference>
<dbReference type="InterPro" id="IPR016484">
    <property type="entry name" value="GTPase_Der"/>
</dbReference>
<dbReference type="InterPro" id="IPR032859">
    <property type="entry name" value="KH_dom-like"/>
</dbReference>
<dbReference type="InterPro" id="IPR015946">
    <property type="entry name" value="KH_dom-like_a/b"/>
</dbReference>
<dbReference type="InterPro" id="IPR027417">
    <property type="entry name" value="P-loop_NTPase"/>
</dbReference>
<dbReference type="InterPro" id="IPR005225">
    <property type="entry name" value="Small_GTP-bd"/>
</dbReference>
<dbReference type="NCBIfam" id="TIGR03594">
    <property type="entry name" value="GTPase_EngA"/>
    <property type="match status" value="1"/>
</dbReference>
<dbReference type="NCBIfam" id="TIGR00231">
    <property type="entry name" value="small_GTP"/>
    <property type="match status" value="2"/>
</dbReference>
<dbReference type="PANTHER" id="PTHR43834">
    <property type="entry name" value="GTPASE DER"/>
    <property type="match status" value="1"/>
</dbReference>
<dbReference type="PANTHER" id="PTHR43834:SF6">
    <property type="entry name" value="GTPASE DER"/>
    <property type="match status" value="1"/>
</dbReference>
<dbReference type="Pfam" id="PF14714">
    <property type="entry name" value="KH_dom-like"/>
    <property type="match status" value="1"/>
</dbReference>
<dbReference type="Pfam" id="PF01926">
    <property type="entry name" value="MMR_HSR1"/>
    <property type="match status" value="2"/>
</dbReference>
<dbReference type="PIRSF" id="PIRSF006485">
    <property type="entry name" value="GTP-binding_EngA"/>
    <property type="match status" value="1"/>
</dbReference>
<dbReference type="PRINTS" id="PR00326">
    <property type="entry name" value="GTP1OBG"/>
</dbReference>
<dbReference type="SUPFAM" id="SSF52540">
    <property type="entry name" value="P-loop containing nucleoside triphosphate hydrolases"/>
    <property type="match status" value="2"/>
</dbReference>
<dbReference type="PROSITE" id="PS51712">
    <property type="entry name" value="G_ENGA"/>
    <property type="match status" value="2"/>
</dbReference>
<proteinExistence type="inferred from homology"/>
<organism>
    <name type="scientific">Streptococcus agalactiae serotype Ia (strain ATCC 27591 / A909 / CDC SS700)</name>
    <dbReference type="NCBI Taxonomy" id="205921"/>
    <lineage>
        <taxon>Bacteria</taxon>
        <taxon>Bacillati</taxon>
        <taxon>Bacillota</taxon>
        <taxon>Bacilli</taxon>
        <taxon>Lactobacillales</taxon>
        <taxon>Streptococcaceae</taxon>
        <taxon>Streptococcus</taxon>
    </lineage>
</organism>
<accession>Q3JZR6</accession>
<feature type="chain" id="PRO_1000011751" description="GTPase Der">
    <location>
        <begin position="1"/>
        <end position="436"/>
    </location>
</feature>
<feature type="domain" description="EngA-type G 1">
    <location>
        <begin position="4"/>
        <end position="167"/>
    </location>
</feature>
<feature type="domain" description="EngA-type G 2">
    <location>
        <begin position="175"/>
        <end position="351"/>
    </location>
</feature>
<feature type="domain" description="KH-like" evidence="1">
    <location>
        <begin position="352"/>
        <end position="436"/>
    </location>
</feature>
<feature type="binding site" evidence="1">
    <location>
        <begin position="10"/>
        <end position="17"/>
    </location>
    <ligand>
        <name>GTP</name>
        <dbReference type="ChEBI" id="CHEBI:37565"/>
        <label>1</label>
    </ligand>
</feature>
<feature type="binding site" evidence="1">
    <location>
        <begin position="57"/>
        <end position="61"/>
    </location>
    <ligand>
        <name>GTP</name>
        <dbReference type="ChEBI" id="CHEBI:37565"/>
        <label>1</label>
    </ligand>
</feature>
<feature type="binding site" evidence="1">
    <location>
        <begin position="119"/>
        <end position="122"/>
    </location>
    <ligand>
        <name>GTP</name>
        <dbReference type="ChEBI" id="CHEBI:37565"/>
        <label>1</label>
    </ligand>
</feature>
<feature type="binding site" evidence="1">
    <location>
        <begin position="181"/>
        <end position="188"/>
    </location>
    <ligand>
        <name>GTP</name>
        <dbReference type="ChEBI" id="CHEBI:37565"/>
        <label>2</label>
    </ligand>
</feature>
<feature type="binding site" evidence="1">
    <location>
        <begin position="229"/>
        <end position="233"/>
    </location>
    <ligand>
        <name>GTP</name>
        <dbReference type="ChEBI" id="CHEBI:37565"/>
        <label>2</label>
    </ligand>
</feature>
<feature type="binding site" evidence="1">
    <location>
        <begin position="294"/>
        <end position="297"/>
    </location>
    <ligand>
        <name>GTP</name>
        <dbReference type="ChEBI" id="CHEBI:37565"/>
        <label>2</label>
    </ligand>
</feature>